<evidence type="ECO:0000255" key="1">
    <source>
        <dbReference type="HAMAP-Rule" id="MF_00156"/>
    </source>
</evidence>
<organism>
    <name type="scientific">Acinetobacter baumannii (strain ACICU)</name>
    <dbReference type="NCBI Taxonomy" id="405416"/>
    <lineage>
        <taxon>Bacteria</taxon>
        <taxon>Pseudomonadati</taxon>
        <taxon>Pseudomonadota</taxon>
        <taxon>Gammaproteobacteria</taxon>
        <taxon>Moraxellales</taxon>
        <taxon>Moraxellaceae</taxon>
        <taxon>Acinetobacter</taxon>
        <taxon>Acinetobacter calcoaceticus/baumannii complex</taxon>
    </lineage>
</organism>
<accession>B2HTG4</accession>
<name>PANB_ACIBC</name>
<reference key="1">
    <citation type="journal article" date="2008" name="Antimicrob. Agents Chemother.">
        <title>Whole-genome pyrosequencing of an epidemic multidrug-resistant Acinetobacter baumannii strain belonging to the European clone II group.</title>
        <authorList>
            <person name="Iacono M."/>
            <person name="Villa L."/>
            <person name="Fortini D."/>
            <person name="Bordoni R."/>
            <person name="Imperi F."/>
            <person name="Bonnal R.J."/>
            <person name="Sicheritz-Ponten T."/>
            <person name="De Bellis G."/>
            <person name="Visca P."/>
            <person name="Cassone A."/>
            <person name="Carattoli A."/>
        </authorList>
    </citation>
    <scope>NUCLEOTIDE SEQUENCE [LARGE SCALE GENOMIC DNA]</scope>
    <source>
        <strain>ACICU</strain>
    </source>
</reference>
<feature type="chain" id="PRO_1000096933" description="3-methyl-2-oxobutanoate hydroxymethyltransferase">
    <location>
        <begin position="1"/>
        <end position="269"/>
    </location>
</feature>
<feature type="active site" description="Proton acceptor" evidence="1">
    <location>
        <position position="179"/>
    </location>
</feature>
<feature type="binding site" evidence="1">
    <location>
        <begin position="43"/>
        <end position="44"/>
    </location>
    <ligand>
        <name>3-methyl-2-oxobutanoate</name>
        <dbReference type="ChEBI" id="CHEBI:11851"/>
    </ligand>
</feature>
<feature type="binding site" evidence="1">
    <location>
        <position position="43"/>
    </location>
    <ligand>
        <name>Mg(2+)</name>
        <dbReference type="ChEBI" id="CHEBI:18420"/>
    </ligand>
</feature>
<feature type="binding site" evidence="1">
    <location>
        <position position="82"/>
    </location>
    <ligand>
        <name>3-methyl-2-oxobutanoate</name>
        <dbReference type="ChEBI" id="CHEBI:11851"/>
    </ligand>
</feature>
<feature type="binding site" evidence="1">
    <location>
        <position position="82"/>
    </location>
    <ligand>
        <name>Mg(2+)</name>
        <dbReference type="ChEBI" id="CHEBI:18420"/>
    </ligand>
</feature>
<feature type="binding site" evidence="1">
    <location>
        <position position="110"/>
    </location>
    <ligand>
        <name>3-methyl-2-oxobutanoate</name>
        <dbReference type="ChEBI" id="CHEBI:11851"/>
    </ligand>
</feature>
<feature type="binding site" evidence="1">
    <location>
        <position position="112"/>
    </location>
    <ligand>
        <name>Mg(2+)</name>
        <dbReference type="ChEBI" id="CHEBI:18420"/>
    </ligand>
</feature>
<proteinExistence type="inferred from homology"/>
<sequence length="269" mass="28976">MISLSDLRKFKAEGRKFSCLTCYDASMAKAMELAEIDTILIGDSLGMAIQGRDSTLPVTVEDMAYHTAAVRRGNQHALIMTDLPFMSYATLNDALQNAKTVMQAGAQMIKIEGGAWLSETVQVLTRNGVPVCVHLGLTPQSVHVFGGYKLQARTREAADQLIADCTAVVEAGAAVLLLECVPAQLGQEIAELFPNTPVIGIGAGNATDGQVLVVQDMLGLTFGRVARFVRNFMKEQSGETAILDAFKAFHAAVQDQSFPAKEHTFQVEL</sequence>
<protein>
    <recommendedName>
        <fullName evidence="1">3-methyl-2-oxobutanoate hydroxymethyltransferase</fullName>
        <ecNumber evidence="1">2.1.2.11</ecNumber>
    </recommendedName>
    <alternativeName>
        <fullName evidence="1">Ketopantoate hydroxymethyltransferase</fullName>
        <shortName evidence="1">KPHMT</shortName>
    </alternativeName>
</protein>
<comment type="function">
    <text evidence="1">Catalyzes the reversible reaction in which hydroxymethyl group from 5,10-methylenetetrahydrofolate is transferred onto alpha-ketoisovalerate to form ketopantoate.</text>
</comment>
<comment type="catalytic activity">
    <reaction evidence="1">
        <text>3-methyl-2-oxobutanoate + (6R)-5,10-methylene-5,6,7,8-tetrahydrofolate + H2O = 2-dehydropantoate + (6S)-5,6,7,8-tetrahydrofolate</text>
        <dbReference type="Rhea" id="RHEA:11824"/>
        <dbReference type="ChEBI" id="CHEBI:11561"/>
        <dbReference type="ChEBI" id="CHEBI:11851"/>
        <dbReference type="ChEBI" id="CHEBI:15377"/>
        <dbReference type="ChEBI" id="CHEBI:15636"/>
        <dbReference type="ChEBI" id="CHEBI:57453"/>
        <dbReference type="EC" id="2.1.2.11"/>
    </reaction>
</comment>
<comment type="cofactor">
    <cofactor evidence="1">
        <name>Mg(2+)</name>
        <dbReference type="ChEBI" id="CHEBI:18420"/>
    </cofactor>
    <text evidence="1">Binds 1 Mg(2+) ion per subunit.</text>
</comment>
<comment type="pathway">
    <text evidence="1">Cofactor biosynthesis; (R)-pantothenate biosynthesis; (R)-pantoate from 3-methyl-2-oxobutanoate: step 1/2.</text>
</comment>
<comment type="subunit">
    <text evidence="1">Homodecamer; pentamer of dimers.</text>
</comment>
<comment type="subcellular location">
    <subcellularLocation>
        <location evidence="1">Cytoplasm</location>
    </subcellularLocation>
</comment>
<comment type="similarity">
    <text evidence="1">Belongs to the PanB family.</text>
</comment>
<keyword id="KW-0963">Cytoplasm</keyword>
<keyword id="KW-0460">Magnesium</keyword>
<keyword id="KW-0479">Metal-binding</keyword>
<keyword id="KW-0566">Pantothenate biosynthesis</keyword>
<keyword id="KW-0808">Transferase</keyword>
<gene>
    <name evidence="1" type="primary">panB</name>
    <name type="ordered locus">ACICU_00589</name>
</gene>
<dbReference type="EC" id="2.1.2.11" evidence="1"/>
<dbReference type="EMBL" id="CP000863">
    <property type="protein sequence ID" value="ACC55901.1"/>
    <property type="molecule type" value="Genomic_DNA"/>
</dbReference>
<dbReference type="RefSeq" id="WP_000624763.1">
    <property type="nucleotide sequence ID" value="NZ_CP031380.1"/>
</dbReference>
<dbReference type="SMR" id="B2HTG4"/>
<dbReference type="GeneID" id="92892564"/>
<dbReference type="KEGG" id="abc:ACICU_00589"/>
<dbReference type="HOGENOM" id="CLU_036645_1_0_6"/>
<dbReference type="UniPathway" id="UPA00028">
    <property type="reaction ID" value="UER00003"/>
</dbReference>
<dbReference type="Proteomes" id="UP000008839">
    <property type="component" value="Chromosome"/>
</dbReference>
<dbReference type="GO" id="GO:0005737">
    <property type="term" value="C:cytoplasm"/>
    <property type="evidence" value="ECO:0007669"/>
    <property type="project" value="UniProtKB-SubCell"/>
</dbReference>
<dbReference type="GO" id="GO:0003864">
    <property type="term" value="F:3-methyl-2-oxobutanoate hydroxymethyltransferase activity"/>
    <property type="evidence" value="ECO:0007669"/>
    <property type="project" value="UniProtKB-UniRule"/>
</dbReference>
<dbReference type="GO" id="GO:0000287">
    <property type="term" value="F:magnesium ion binding"/>
    <property type="evidence" value="ECO:0007669"/>
    <property type="project" value="TreeGrafter"/>
</dbReference>
<dbReference type="GO" id="GO:0015940">
    <property type="term" value="P:pantothenate biosynthetic process"/>
    <property type="evidence" value="ECO:0007669"/>
    <property type="project" value="UniProtKB-UniRule"/>
</dbReference>
<dbReference type="CDD" id="cd06557">
    <property type="entry name" value="KPHMT-like"/>
    <property type="match status" value="1"/>
</dbReference>
<dbReference type="FunFam" id="3.20.20.60:FF:000003">
    <property type="entry name" value="3-methyl-2-oxobutanoate hydroxymethyltransferase"/>
    <property type="match status" value="1"/>
</dbReference>
<dbReference type="Gene3D" id="3.20.20.60">
    <property type="entry name" value="Phosphoenolpyruvate-binding domains"/>
    <property type="match status" value="1"/>
</dbReference>
<dbReference type="HAMAP" id="MF_00156">
    <property type="entry name" value="PanB"/>
    <property type="match status" value="1"/>
</dbReference>
<dbReference type="InterPro" id="IPR003700">
    <property type="entry name" value="Pantoate_hydroxy_MeTrfase"/>
</dbReference>
<dbReference type="InterPro" id="IPR015813">
    <property type="entry name" value="Pyrv/PenolPyrv_kinase-like_dom"/>
</dbReference>
<dbReference type="InterPro" id="IPR040442">
    <property type="entry name" value="Pyrv_kinase-like_dom_sf"/>
</dbReference>
<dbReference type="NCBIfam" id="TIGR00222">
    <property type="entry name" value="panB"/>
    <property type="match status" value="1"/>
</dbReference>
<dbReference type="NCBIfam" id="NF001452">
    <property type="entry name" value="PRK00311.1"/>
    <property type="match status" value="1"/>
</dbReference>
<dbReference type="PANTHER" id="PTHR20881">
    <property type="entry name" value="3-METHYL-2-OXOBUTANOATE HYDROXYMETHYLTRANSFERASE"/>
    <property type="match status" value="1"/>
</dbReference>
<dbReference type="PANTHER" id="PTHR20881:SF0">
    <property type="entry name" value="3-METHYL-2-OXOBUTANOATE HYDROXYMETHYLTRANSFERASE"/>
    <property type="match status" value="1"/>
</dbReference>
<dbReference type="Pfam" id="PF02548">
    <property type="entry name" value="Pantoate_transf"/>
    <property type="match status" value="1"/>
</dbReference>
<dbReference type="PIRSF" id="PIRSF000388">
    <property type="entry name" value="Pantoate_hydroxy_MeTrfase"/>
    <property type="match status" value="1"/>
</dbReference>
<dbReference type="SUPFAM" id="SSF51621">
    <property type="entry name" value="Phosphoenolpyruvate/pyruvate domain"/>
    <property type="match status" value="1"/>
</dbReference>